<evidence type="ECO:0000250" key="1">
    <source>
        <dbReference type="UniProtKB" id="Q25QX6"/>
    </source>
</evidence>
<evidence type="ECO:0000255" key="2"/>
<evidence type="ECO:0000256" key="3">
    <source>
        <dbReference type="SAM" id="MobiDB-lite"/>
    </source>
</evidence>
<evidence type="ECO:0000269" key="4">
    <source>
    </source>
</evidence>
<evidence type="ECO:0000269" key="5">
    <source>
    </source>
</evidence>
<evidence type="ECO:0000303" key="6">
    <source>
    </source>
</evidence>
<evidence type="ECO:0000305" key="7"/>
<evidence type="ECO:0000312" key="8">
    <source>
        <dbReference type="EMBL" id="BAH14956.1"/>
    </source>
</evidence>
<keyword id="KW-0217">Developmental protein</keyword>
<keyword id="KW-0539">Nucleus</keyword>
<keyword id="KW-1185">Reference proteome</keyword>
<keyword id="KW-0678">Repressor</keyword>
<keyword id="KW-0804">Transcription</keyword>
<keyword id="KW-0805">Transcription regulation</keyword>
<feature type="chain" id="PRO_0000401112" description="Protein ripply3">
    <location>
        <begin position="1"/>
        <end position="170"/>
    </location>
</feature>
<feature type="region of interest" description="Disordered" evidence="3">
    <location>
        <begin position="51"/>
        <end position="78"/>
    </location>
</feature>
<feature type="region of interest" description="Ripply homology domain" evidence="2">
    <location>
        <begin position="79"/>
        <end position="114"/>
    </location>
</feature>
<feature type="region of interest" description="Disordered" evidence="3">
    <location>
        <begin position="142"/>
        <end position="170"/>
    </location>
</feature>
<feature type="short sequence motif" description="WRPW motif" evidence="2">
    <location>
        <begin position="40"/>
        <end position="43"/>
    </location>
</feature>
<feature type="compositionally biased region" description="Basic and acidic residues" evidence="3">
    <location>
        <begin position="51"/>
        <end position="61"/>
    </location>
</feature>
<feature type="compositionally biased region" description="Polar residues" evidence="3">
    <location>
        <begin position="142"/>
        <end position="155"/>
    </location>
</feature>
<feature type="mutagenesis site" description="Inhibits transcriptional repression activity on TBX1; when associated with 105-A--A-109.">
    <original>WRPW</original>
    <variation>AAAA</variation>
    <location>
        <begin position="40"/>
        <end position="43"/>
    </location>
</feature>
<feature type="mutagenesis site" description="Inhibits transcriptional repression activity on TBX1; when associated with 40-A--A-44.">
    <original>FPVQ</original>
    <variation>AAAA</variation>
    <location>
        <begin position="105"/>
        <end position="108"/>
    </location>
</feature>
<reference evidence="7 8" key="1">
    <citation type="journal article" date="2009" name="Int. J. Dev. Biol.">
        <title>The Xenopus Bowline/Ripply family proteins negatively regulate the transcriptional activity of T-box transcription factors.</title>
        <authorList>
            <person name="Hitachi K."/>
            <person name="Danno H."/>
            <person name="Tazumi S."/>
            <person name="Aihara Y."/>
            <person name="Uchiyama H."/>
            <person name="Okabayashi K."/>
            <person name="Kondow A."/>
            <person name="Asashima M."/>
        </authorList>
    </citation>
    <scope>NUCLEOTIDE SEQUENCE [MRNA]</scope>
    <scope>FUNCTION</scope>
    <scope>INTERACTION WITH TBX1 AND TLE4</scope>
    <scope>SUBCELLULAR LOCATION</scope>
    <scope>TISSUE SPECIFICITY</scope>
</reference>
<reference key="2">
    <citation type="journal article" date="2012" name="Development">
        <title>RIPPLY3 is a retinoic acid-inducible repressor required for setting the borders of the pre-placodal ectoderm.</title>
        <authorList>
            <person name="Janesick A."/>
            <person name="Shiotsugu J."/>
            <person name="Taketani M."/>
            <person name="Blumberg B."/>
        </authorList>
    </citation>
    <scope>FUNCTION</scope>
    <scope>INDUCTION</scope>
    <scope>DEVELOPMENTAL STAGE</scope>
    <scope>MUTAGENESIS OF 40-TRP--TRP-44 AND 105-PHE--GLN-109</scope>
</reference>
<proteinExistence type="evidence at protein level"/>
<dbReference type="EMBL" id="AB455086">
    <property type="protein sequence ID" value="BAH14956.1"/>
    <property type="molecule type" value="mRNA"/>
</dbReference>
<dbReference type="RefSeq" id="NP_001153161.1">
    <property type="nucleotide sequence ID" value="NM_001159689.1"/>
</dbReference>
<dbReference type="GeneID" id="100294521"/>
<dbReference type="KEGG" id="xla:100294521"/>
<dbReference type="AGR" id="Xenbase:XB-GENE-6372204"/>
<dbReference type="CTD" id="100294521"/>
<dbReference type="Xenbase" id="XB-GENE-6372204">
    <property type="gene designation" value="ripply3.S"/>
</dbReference>
<dbReference type="OrthoDB" id="9905973at2759"/>
<dbReference type="Proteomes" id="UP000186698">
    <property type="component" value="Chromosome 2S"/>
</dbReference>
<dbReference type="Bgee" id="100294521">
    <property type="expression patterns" value="Expressed in neurula embryo and 9 other cell types or tissues"/>
</dbReference>
<dbReference type="GO" id="GO:0005634">
    <property type="term" value="C:nucleus"/>
    <property type="evidence" value="ECO:0000314"/>
    <property type="project" value="UniProtKB"/>
</dbReference>
<dbReference type="GO" id="GO:0003712">
    <property type="term" value="F:transcription coregulator activity"/>
    <property type="evidence" value="ECO:0000314"/>
    <property type="project" value="UniProtKB"/>
</dbReference>
<dbReference type="GO" id="GO:0009948">
    <property type="term" value="P:anterior/posterior axis specification"/>
    <property type="evidence" value="ECO:0000315"/>
    <property type="project" value="GO_Central"/>
</dbReference>
<dbReference type="GO" id="GO:0071300">
    <property type="term" value="P:cellular response to retinoic acid"/>
    <property type="evidence" value="ECO:0000314"/>
    <property type="project" value="UniProtKB"/>
</dbReference>
<dbReference type="GO" id="GO:0060788">
    <property type="term" value="P:ectodermal placode formation"/>
    <property type="evidence" value="ECO:0000315"/>
    <property type="project" value="UniProtKB"/>
</dbReference>
<dbReference type="GO" id="GO:0009880">
    <property type="term" value="P:embryonic pattern specification"/>
    <property type="evidence" value="ECO:0000318"/>
    <property type="project" value="GO_Central"/>
</dbReference>
<dbReference type="GO" id="GO:0043433">
    <property type="term" value="P:negative regulation of DNA-binding transcription factor activity"/>
    <property type="evidence" value="ECO:0000314"/>
    <property type="project" value="UniProtKB"/>
</dbReference>
<dbReference type="GO" id="GO:0045892">
    <property type="term" value="P:negative regulation of DNA-templated transcription"/>
    <property type="evidence" value="ECO:0000314"/>
    <property type="project" value="UniProtKB"/>
</dbReference>
<dbReference type="GO" id="GO:0000122">
    <property type="term" value="P:negative regulation of transcription by RNA polymerase II"/>
    <property type="evidence" value="ECO:0000314"/>
    <property type="project" value="GO_Central"/>
</dbReference>
<dbReference type="InterPro" id="IPR028127">
    <property type="entry name" value="Ripply_fam"/>
</dbReference>
<dbReference type="PANTHER" id="PTHR16770">
    <property type="entry name" value="PROTEIN RIPPLY-LIKE"/>
    <property type="match status" value="1"/>
</dbReference>
<dbReference type="PANTHER" id="PTHR16770:SF4">
    <property type="entry name" value="PROTEIN RIPPLY3"/>
    <property type="match status" value="1"/>
</dbReference>
<dbReference type="Pfam" id="PF14998">
    <property type="entry name" value="Ripply"/>
    <property type="match status" value="1"/>
</dbReference>
<accession>B7XDF1</accession>
<name>DSCR6_XENLA</name>
<organism>
    <name type="scientific">Xenopus laevis</name>
    <name type="common">African clawed frog</name>
    <dbReference type="NCBI Taxonomy" id="8355"/>
    <lineage>
        <taxon>Eukaryota</taxon>
        <taxon>Metazoa</taxon>
        <taxon>Chordata</taxon>
        <taxon>Craniata</taxon>
        <taxon>Vertebrata</taxon>
        <taxon>Euteleostomi</taxon>
        <taxon>Amphibia</taxon>
        <taxon>Batrachia</taxon>
        <taxon>Anura</taxon>
        <taxon>Pipoidea</taxon>
        <taxon>Pipidae</taxon>
        <taxon>Xenopodinae</taxon>
        <taxon>Xenopus</taxon>
        <taxon>Xenopus</taxon>
    </lineage>
</organism>
<sequence length="170" mass="18941">MDSSQYMLKATLTQMCLCSRGVRNVHSEHPQQQDSSLTLWRPWLLGAGDRELDGQQRRSGEADGVPTNTGPKGALGFQHPVRLYMPKSKTSEYLQHMGRKVLASFPVQATIHFYNDDSDSEEEDEEEEMEFYNYYQNCAANGVDSSRGSSDNYSVQGGPKRNIGSHAGSA</sequence>
<gene>
    <name type="primary">ripply3</name>
    <name type="synonym">dscr6</name>
</gene>
<protein>
    <recommendedName>
        <fullName evidence="6">Protein ripply3</fullName>
        <shortName evidence="6">XRipply3</shortName>
    </recommendedName>
    <alternativeName>
        <fullName>Down syndrome critical region protein 6 homolog</fullName>
    </alternativeName>
</protein>
<comment type="function">
    <text evidence="4 5">Acts as a transcriptional corepressor. Negative regulator of the transcriptional activity of tbx1 that plays a key role in pharyngeal development. Plays a role in the formation of the anteroposterior (AP) axis during embryonic development; required to establish the posterolateral border of the pre-placodal ectoderm (PPE) acting downstream of the retinoic acid receptor (RAR) signaling.</text>
</comment>
<comment type="subunit">
    <text evidence="4">Interacts with tbx1 and tle4/grg4.</text>
</comment>
<comment type="subcellular location">
    <subcellularLocation>
        <location evidence="4">Nucleus</location>
    </subcellularLocation>
</comment>
<comment type="tissue specificity">
    <text evidence="4">At neurula stage, expressed in the region close to the heart mesoderm. At the tailbud stage, expressed in the pharyngeal region.</text>
</comment>
<comment type="developmental stage">
    <text evidence="5">Maternally expressed. Ubiquitously expressed until stage 16. Expressed in the pre-placodal ectoderm domain at stage 18. Expressed in the epibranchial placodes of the tailbud embryos. Expressed in the pronephros.</text>
</comment>
<comment type="induction">
    <text evidence="5">Up-regulated by retinoc acid (RA) in the pre-placodal ectoderm (PPE) during development.</text>
</comment>
<comment type="domain">
    <text>The Ripply homology domain and the WRPW motif are both necessary for its transcriptional corepressor activity on the transcription activator tbx1.</text>
</comment>
<comment type="domain">
    <text evidence="1">The WRPW motif is required for binding to tle/groucho proteins.</text>
</comment>
<comment type="similarity">
    <text evidence="2">Belongs to the ripply family.</text>
</comment>